<accession>A5U5Z1</accession>
<reference key="1">
    <citation type="journal article" date="2008" name="PLoS ONE">
        <title>Genetic basis of virulence attenuation revealed by comparative genomic analysis of Mycobacterium tuberculosis strain H37Ra versus H37Rv.</title>
        <authorList>
            <person name="Zheng H."/>
            <person name="Lu L."/>
            <person name="Wang B."/>
            <person name="Pu S."/>
            <person name="Zhang X."/>
            <person name="Zhu G."/>
            <person name="Shi W."/>
            <person name="Zhang L."/>
            <person name="Wang H."/>
            <person name="Wang S."/>
            <person name="Zhao G."/>
            <person name="Zhang Y."/>
        </authorList>
    </citation>
    <scope>NUCLEOTIDE SEQUENCE [LARGE SCALE GENOMIC DNA]</scope>
    <source>
        <strain>ATCC 25177 / H37Ra</strain>
    </source>
</reference>
<dbReference type="EMBL" id="CP000611">
    <property type="protein sequence ID" value="ABQ74441.1"/>
    <property type="molecule type" value="Genomic_DNA"/>
</dbReference>
<dbReference type="RefSeq" id="WP_003413663.1">
    <property type="nucleotide sequence ID" value="NZ_CP016972.1"/>
</dbReference>
<dbReference type="KEGG" id="mra:MRA_2668"/>
<dbReference type="eggNOG" id="COG1742">
    <property type="taxonomic scope" value="Bacteria"/>
</dbReference>
<dbReference type="HOGENOM" id="CLU_117653_0_1_11"/>
<dbReference type="Proteomes" id="UP000001988">
    <property type="component" value="Chromosome"/>
</dbReference>
<dbReference type="GO" id="GO:0005886">
    <property type="term" value="C:plasma membrane"/>
    <property type="evidence" value="ECO:0007669"/>
    <property type="project" value="UniProtKB-SubCell"/>
</dbReference>
<dbReference type="HAMAP" id="MF_00010">
    <property type="entry name" value="UPF0060"/>
    <property type="match status" value="1"/>
</dbReference>
<dbReference type="InterPro" id="IPR003844">
    <property type="entry name" value="UPF0060"/>
</dbReference>
<dbReference type="NCBIfam" id="NF002586">
    <property type="entry name" value="PRK02237.1"/>
    <property type="match status" value="1"/>
</dbReference>
<dbReference type="PANTHER" id="PTHR36116">
    <property type="entry name" value="UPF0060 MEMBRANE PROTEIN YNFA"/>
    <property type="match status" value="1"/>
</dbReference>
<dbReference type="PANTHER" id="PTHR36116:SF1">
    <property type="entry name" value="UPF0060 MEMBRANE PROTEIN YNFA"/>
    <property type="match status" value="1"/>
</dbReference>
<dbReference type="Pfam" id="PF02694">
    <property type="entry name" value="UPF0060"/>
    <property type="match status" value="1"/>
</dbReference>
<dbReference type="SUPFAM" id="SSF103481">
    <property type="entry name" value="Multidrug resistance efflux transporter EmrE"/>
    <property type="match status" value="1"/>
</dbReference>
<keyword id="KW-1003">Cell membrane</keyword>
<keyword id="KW-0472">Membrane</keyword>
<keyword id="KW-1185">Reference proteome</keyword>
<keyword id="KW-0812">Transmembrane</keyword>
<keyword id="KW-1133">Transmembrane helix</keyword>
<organism>
    <name type="scientific">Mycobacterium tuberculosis (strain ATCC 25177 / H37Ra)</name>
    <dbReference type="NCBI Taxonomy" id="419947"/>
    <lineage>
        <taxon>Bacteria</taxon>
        <taxon>Bacillati</taxon>
        <taxon>Actinomycetota</taxon>
        <taxon>Actinomycetes</taxon>
        <taxon>Mycobacteriales</taxon>
        <taxon>Mycobacteriaceae</taxon>
        <taxon>Mycobacterium</taxon>
        <taxon>Mycobacterium tuberculosis complex</taxon>
    </lineage>
</organism>
<evidence type="ECO:0000255" key="1">
    <source>
        <dbReference type="HAMAP-Rule" id="MF_00010"/>
    </source>
</evidence>
<protein>
    <recommendedName>
        <fullName evidence="1">UPF0060 membrane protein MRA_2668</fullName>
    </recommendedName>
</protein>
<proteinExistence type="inferred from homology"/>
<feature type="chain" id="PRO_1000000763" description="UPF0060 membrane protein MRA_2668">
    <location>
        <begin position="1"/>
        <end position="110"/>
    </location>
</feature>
<feature type="transmembrane region" description="Helical" evidence="1">
    <location>
        <begin position="6"/>
        <end position="26"/>
    </location>
</feature>
<feature type="transmembrane region" description="Helical" evidence="1">
    <location>
        <begin position="32"/>
        <end position="52"/>
    </location>
</feature>
<feature type="transmembrane region" description="Helical" evidence="1">
    <location>
        <begin position="61"/>
        <end position="81"/>
    </location>
</feature>
<feature type="transmembrane region" description="Helical" evidence="1">
    <location>
        <begin position="90"/>
        <end position="110"/>
    </location>
</feature>
<sequence length="110" mass="11720">MVVRSILLFVLAAVAEIGGAWLVWQGVREQRGWLWAGLGVIALGVYGFFATLQPDAHFGRVLAAYGGVFVAGSLAWGMALDGFRPDRWDVIGALGCMAGVAVIMYAPRGH</sequence>
<comment type="subcellular location">
    <subcellularLocation>
        <location evidence="1">Cell membrane</location>
        <topology evidence="1">Multi-pass membrane protein</topology>
    </subcellularLocation>
</comment>
<comment type="similarity">
    <text evidence="1">Belongs to the UPF0060 family.</text>
</comment>
<gene>
    <name type="ordered locus">MRA_2668</name>
</gene>
<name>Y2668_MYCTA</name>